<organism>
    <name type="scientific">Pseudomonas syringae pv. tomato (strain ATCC BAA-871 / DC3000)</name>
    <dbReference type="NCBI Taxonomy" id="223283"/>
    <lineage>
        <taxon>Bacteria</taxon>
        <taxon>Pseudomonadati</taxon>
        <taxon>Pseudomonadota</taxon>
        <taxon>Gammaproteobacteria</taxon>
        <taxon>Pseudomonadales</taxon>
        <taxon>Pseudomonadaceae</taxon>
        <taxon>Pseudomonas</taxon>
    </lineage>
</organism>
<comment type="function">
    <text evidence="1">Member of a network of 50S ribosomal subunit biogenesis factors which assembles along the 30S-50S interface, preventing incorrect 23S rRNA structures from forming. Promotes peptidyl transferase center (PTC) maturation.</text>
</comment>
<comment type="subcellular location">
    <subcellularLocation>
        <location evidence="1">Cytoplasm</location>
    </subcellularLocation>
    <text evidence="1">Associates with late stage pre-50S ribosomal subunits.</text>
</comment>
<comment type="similarity">
    <text evidence="1">Belongs to the DarP family.</text>
</comment>
<name>DARP_PSESM</name>
<reference key="1">
    <citation type="journal article" date="2003" name="Proc. Natl. Acad. Sci. U.S.A.">
        <title>The complete genome sequence of the Arabidopsis and tomato pathogen Pseudomonas syringae pv. tomato DC3000.</title>
        <authorList>
            <person name="Buell C.R."/>
            <person name="Joardar V."/>
            <person name="Lindeberg M."/>
            <person name="Selengut J."/>
            <person name="Paulsen I.T."/>
            <person name="Gwinn M.L."/>
            <person name="Dodson R.J."/>
            <person name="DeBoy R.T."/>
            <person name="Durkin A.S."/>
            <person name="Kolonay J.F."/>
            <person name="Madupu R."/>
            <person name="Daugherty S.C."/>
            <person name="Brinkac L.M."/>
            <person name="Beanan M.J."/>
            <person name="Haft D.H."/>
            <person name="Nelson W.C."/>
            <person name="Davidsen T.M."/>
            <person name="Zafar N."/>
            <person name="Zhou L."/>
            <person name="Liu J."/>
            <person name="Yuan Q."/>
            <person name="Khouri H.M."/>
            <person name="Fedorova N.B."/>
            <person name="Tran B."/>
            <person name="Russell D."/>
            <person name="Berry K.J."/>
            <person name="Utterback T.R."/>
            <person name="Van Aken S.E."/>
            <person name="Feldblyum T.V."/>
            <person name="D'Ascenzo M."/>
            <person name="Deng W.-L."/>
            <person name="Ramos A.R."/>
            <person name="Alfano J.R."/>
            <person name="Cartinhour S."/>
            <person name="Chatterjee A.K."/>
            <person name="Delaney T.P."/>
            <person name="Lazarowitz S.G."/>
            <person name="Martin G.B."/>
            <person name="Schneider D.J."/>
            <person name="Tang X."/>
            <person name="Bender C.L."/>
            <person name="White O."/>
            <person name="Fraser C.M."/>
            <person name="Collmer A."/>
        </authorList>
    </citation>
    <scope>NUCLEOTIDE SEQUENCE [LARGE SCALE GENOMIC DNA]</scope>
    <source>
        <strain>ATCC BAA-871 / DC3000</strain>
    </source>
</reference>
<reference evidence="2" key="2">
    <citation type="submission" date="2007-03" db="PDB data bank">
        <title>The crystal structure of a conserved putative protein from Pseudomonas syringae pv. tomato str. DC3000.</title>
        <authorList>
            <person name="Tan K."/>
            <person name="Bigelow L."/>
            <person name="Clancy S."/>
            <person name="Joachimiak A."/>
        </authorList>
    </citation>
    <scope>X-RAY CRYSTALLOGRAPHY (2.19 ANGSTROMS)</scope>
    <source>
        <strain>ATCC BAA-871 / DC3000</strain>
    </source>
</reference>
<sequence>MVDSYDDSLDGEKSKTQVKRELHALVDLGERLTTLKADVLAKLPLTDALRKALAEAPKHTANIARKRHILFIGKLMRDQDQEAILVLLDQLDASTRQYNERFHNLERWRDRLIAGDDADLEKFVIEYPDADRQQLRSLIRQAQHEVARNKPPATSRKIFKYIRELDELQRGLR</sequence>
<dbReference type="EMBL" id="AE016853">
    <property type="protein sequence ID" value="AAO57913.1"/>
    <property type="molecule type" value="Genomic_DNA"/>
</dbReference>
<dbReference type="RefSeq" id="NP_794218.1">
    <property type="nucleotide sequence ID" value="NC_004578.1"/>
</dbReference>
<dbReference type="PDB" id="2P0T">
    <property type="method" value="X-ray"/>
    <property type="resolution" value="2.19 A"/>
    <property type="chains" value="A=1-173"/>
</dbReference>
<dbReference type="PDBsum" id="2P0T"/>
<dbReference type="SMR" id="Q87WS9"/>
<dbReference type="STRING" id="223283.PSPTO_4464"/>
<dbReference type="KEGG" id="pst:PSPTO_4464"/>
<dbReference type="PATRIC" id="fig|223283.9.peg.4579"/>
<dbReference type="eggNOG" id="COG3028">
    <property type="taxonomic scope" value="Bacteria"/>
</dbReference>
<dbReference type="HOGENOM" id="CLU_106757_4_0_6"/>
<dbReference type="OrthoDB" id="5293604at2"/>
<dbReference type="PhylomeDB" id="Q87WS9"/>
<dbReference type="EvolutionaryTrace" id="Q87WS9"/>
<dbReference type="Proteomes" id="UP000002515">
    <property type="component" value="Chromosome"/>
</dbReference>
<dbReference type="GO" id="GO:0005829">
    <property type="term" value="C:cytosol"/>
    <property type="evidence" value="ECO:0007669"/>
    <property type="project" value="TreeGrafter"/>
</dbReference>
<dbReference type="GO" id="GO:0043022">
    <property type="term" value="F:ribosome binding"/>
    <property type="evidence" value="ECO:0007669"/>
    <property type="project" value="UniProtKB-UniRule"/>
</dbReference>
<dbReference type="GO" id="GO:0019843">
    <property type="term" value="F:rRNA binding"/>
    <property type="evidence" value="ECO:0007669"/>
    <property type="project" value="UniProtKB-UniRule"/>
</dbReference>
<dbReference type="GO" id="GO:1902626">
    <property type="term" value="P:assembly of large subunit precursor of preribosome"/>
    <property type="evidence" value="ECO:0007669"/>
    <property type="project" value="UniProtKB-UniRule"/>
</dbReference>
<dbReference type="CDD" id="cd16331">
    <property type="entry name" value="YjgA-like"/>
    <property type="match status" value="1"/>
</dbReference>
<dbReference type="FunFam" id="1.10.60.30:FF:000002">
    <property type="entry name" value="UPF0307 protein YjgA"/>
    <property type="match status" value="1"/>
</dbReference>
<dbReference type="Gene3D" id="1.10.60.30">
    <property type="entry name" value="PSPTO4464-like domains"/>
    <property type="match status" value="2"/>
</dbReference>
<dbReference type="HAMAP" id="MF_00765">
    <property type="entry name" value="DarP"/>
    <property type="match status" value="1"/>
</dbReference>
<dbReference type="InterPro" id="IPR006839">
    <property type="entry name" value="DarP"/>
</dbReference>
<dbReference type="InterPro" id="IPR023153">
    <property type="entry name" value="DarP_sf"/>
</dbReference>
<dbReference type="NCBIfam" id="NF003593">
    <property type="entry name" value="PRK05255.1-1"/>
    <property type="match status" value="1"/>
</dbReference>
<dbReference type="PANTHER" id="PTHR38101">
    <property type="entry name" value="UPF0307 PROTEIN YJGA"/>
    <property type="match status" value="1"/>
</dbReference>
<dbReference type="PANTHER" id="PTHR38101:SF1">
    <property type="entry name" value="UPF0307 PROTEIN YJGA"/>
    <property type="match status" value="1"/>
</dbReference>
<dbReference type="Pfam" id="PF04751">
    <property type="entry name" value="DarP"/>
    <property type="match status" value="1"/>
</dbReference>
<dbReference type="PIRSF" id="PIRSF016183">
    <property type="entry name" value="UCP016183"/>
    <property type="match status" value="1"/>
</dbReference>
<dbReference type="SUPFAM" id="SSF158710">
    <property type="entry name" value="PSPTO4464-like"/>
    <property type="match status" value="1"/>
</dbReference>
<evidence type="ECO:0000255" key="1">
    <source>
        <dbReference type="HAMAP-Rule" id="MF_00765"/>
    </source>
</evidence>
<evidence type="ECO:0007744" key="2">
    <source>
        <dbReference type="PDB" id="2P0T"/>
    </source>
</evidence>
<evidence type="ECO:0007829" key="3">
    <source>
        <dbReference type="PDB" id="2P0T"/>
    </source>
</evidence>
<proteinExistence type="evidence at protein level"/>
<protein>
    <recommendedName>
        <fullName evidence="1">Dual-action ribosomal maturation protein DarP</fullName>
    </recommendedName>
    <alternativeName>
        <fullName evidence="1">Large ribosomal subunit assembly factor DarP</fullName>
    </alternativeName>
</protein>
<keyword id="KW-0002">3D-structure</keyword>
<keyword id="KW-0963">Cytoplasm</keyword>
<keyword id="KW-1185">Reference proteome</keyword>
<keyword id="KW-0690">Ribosome biogenesis</keyword>
<keyword id="KW-0694">RNA-binding</keyword>
<keyword id="KW-0699">rRNA-binding</keyword>
<accession>Q87WS9</accession>
<feature type="chain" id="PRO_0000208225" description="Dual-action ribosomal maturation protein DarP">
    <location>
        <begin position="1"/>
        <end position="173"/>
    </location>
</feature>
<feature type="helix" evidence="3">
    <location>
        <begin position="23"/>
        <end position="32"/>
    </location>
</feature>
<feature type="helix" evidence="3">
    <location>
        <begin position="37"/>
        <end position="40"/>
    </location>
</feature>
<feature type="helix" evidence="3">
    <location>
        <begin position="47"/>
        <end position="55"/>
    </location>
</feature>
<feature type="helix" evidence="3">
    <location>
        <begin position="56"/>
        <end position="58"/>
    </location>
</feature>
<feature type="helix" evidence="3">
    <location>
        <begin position="62"/>
        <end position="75"/>
    </location>
</feature>
<feature type="helix" evidence="3">
    <location>
        <begin position="76"/>
        <end position="78"/>
    </location>
</feature>
<feature type="helix" evidence="3">
    <location>
        <begin position="81"/>
        <end position="114"/>
    </location>
</feature>
<feature type="helix" evidence="3">
    <location>
        <begin position="117"/>
        <end position="126"/>
    </location>
</feature>
<feature type="helix" evidence="3">
    <location>
        <begin position="132"/>
        <end position="147"/>
    </location>
</feature>
<feature type="helix" evidence="3">
    <location>
        <begin position="153"/>
        <end position="166"/>
    </location>
</feature>
<gene>
    <name evidence="1" type="primary">darP</name>
    <name type="ordered locus">PSPTO_4464</name>
</gene>